<evidence type="ECO:0000250" key="1"/>
<evidence type="ECO:0000255" key="2"/>
<evidence type="ECO:0000255" key="3">
    <source>
        <dbReference type="PROSITE-ProRule" id="PRU00521"/>
    </source>
</evidence>
<evidence type="ECO:0000256" key="4">
    <source>
        <dbReference type="SAM" id="MobiDB-lite"/>
    </source>
</evidence>
<comment type="function">
    <text>Receptor for leukotriene B4, a potent chemoattractant involved in inflammation and immune response.</text>
</comment>
<comment type="subcellular location">
    <subcellularLocation>
        <location>Cell membrane</location>
        <topology>Multi-pass membrane protein</topology>
    </subcellularLocation>
</comment>
<comment type="tissue specificity">
    <text>Highly expressed on activated leukocytes, including eosinophils.</text>
</comment>
<comment type="PTM">
    <text evidence="1">Phosphorylated by GRK6 upon leukotriene B4 binding; which promotes desensitization.</text>
</comment>
<comment type="similarity">
    <text evidence="3">Belongs to the G-protein coupled receptor 1 family.</text>
</comment>
<sequence>MAANTTSPAAPSSPGGMSLSLLPIVLLSVALAVGLPGNSFVVWSILKRMQKRTVTALLVLNLALADLAVLLTAPFFLHFLARGTWSFREMGCRLCHYVCGISMYASVLLITIMSLDRSLAVARPFMSQKVRTKAFARWVLAGIWVVSFLLAIPVLVYRTVKWNNRTLICAPNYPNKEHKVFHLLFEAITGFLLPFLAVVASYSDIGRRLQARRFRRSRRTGRLVVLIILAFAAFWLPYHLVNLVEAGRTVAGWDKNSPAGQRLRLARYVLIALAFLSSSVNPVLYACAGGGLLRSAGVGFVVKLLEGTGSEVSSTRRGGTLVQTPKDTPACPEPGPTDSFMTSSTIPESSK</sequence>
<feature type="chain" id="PRO_0000069709" description="Leukotriene B4 receptor 1">
    <location>
        <begin position="1"/>
        <end position="351"/>
    </location>
</feature>
<feature type="topological domain" description="Extracellular" evidence="2">
    <location>
        <begin position="1"/>
        <end position="21"/>
    </location>
</feature>
<feature type="transmembrane region" description="Helical; Name=1" evidence="2">
    <location>
        <begin position="22"/>
        <end position="44"/>
    </location>
</feature>
<feature type="topological domain" description="Cytoplasmic" evidence="2">
    <location>
        <begin position="45"/>
        <end position="56"/>
    </location>
</feature>
<feature type="transmembrane region" description="Helical; Name=2" evidence="2">
    <location>
        <begin position="57"/>
        <end position="77"/>
    </location>
</feature>
<feature type="topological domain" description="Extracellular" evidence="2">
    <location>
        <begin position="78"/>
        <end position="93"/>
    </location>
</feature>
<feature type="transmembrane region" description="Helical; Name=3" evidence="2">
    <location>
        <begin position="94"/>
        <end position="115"/>
    </location>
</feature>
<feature type="topological domain" description="Cytoplasmic" evidence="2">
    <location>
        <begin position="116"/>
        <end position="140"/>
    </location>
</feature>
<feature type="transmembrane region" description="Helical; Name=4" evidence="2">
    <location>
        <begin position="141"/>
        <end position="161"/>
    </location>
</feature>
<feature type="topological domain" description="Extracellular" evidence="2">
    <location>
        <begin position="162"/>
        <end position="179"/>
    </location>
</feature>
<feature type="transmembrane region" description="Helical; Name=5" evidence="2">
    <location>
        <begin position="180"/>
        <end position="200"/>
    </location>
</feature>
<feature type="topological domain" description="Cytoplasmic" evidence="2">
    <location>
        <begin position="201"/>
        <end position="222"/>
    </location>
</feature>
<feature type="transmembrane region" description="Helical; Name=6" evidence="2">
    <location>
        <begin position="223"/>
        <end position="243"/>
    </location>
</feature>
<feature type="topological domain" description="Extracellular" evidence="2">
    <location>
        <begin position="244"/>
        <end position="268"/>
    </location>
</feature>
<feature type="transmembrane region" description="Helical; Name=7" evidence="2">
    <location>
        <begin position="269"/>
        <end position="289"/>
    </location>
</feature>
<feature type="topological domain" description="Cytoplasmic" evidence="2">
    <location>
        <begin position="290"/>
        <end position="351"/>
    </location>
</feature>
<feature type="region of interest" description="Disordered" evidence="4">
    <location>
        <begin position="311"/>
        <end position="351"/>
    </location>
</feature>
<feature type="compositionally biased region" description="Polar residues" evidence="4">
    <location>
        <begin position="311"/>
        <end position="326"/>
    </location>
</feature>
<feature type="compositionally biased region" description="Polar residues" evidence="4">
    <location>
        <begin position="339"/>
        <end position="351"/>
    </location>
</feature>
<feature type="glycosylation site" description="N-linked (GlcNAc...) asparagine" evidence="2">
    <location>
        <position position="4"/>
    </location>
</feature>
<feature type="glycosylation site" description="N-linked (GlcNAc...) asparagine" evidence="2">
    <location>
        <position position="164"/>
    </location>
</feature>
<protein>
    <recommendedName>
        <fullName>Leukotriene B4 receptor 1</fullName>
        <shortName>LTB4-R 1</shortName>
        <shortName>LTB4-R1</shortName>
    </recommendedName>
</protein>
<proteinExistence type="evidence at transcript level"/>
<keyword id="KW-1003">Cell membrane</keyword>
<keyword id="KW-0297">G-protein coupled receptor</keyword>
<keyword id="KW-0325">Glycoprotein</keyword>
<keyword id="KW-0472">Membrane</keyword>
<keyword id="KW-0597">Phosphoprotein</keyword>
<keyword id="KW-0675">Receptor</keyword>
<keyword id="KW-1185">Reference proteome</keyword>
<keyword id="KW-0807">Transducer</keyword>
<keyword id="KW-0812">Transmembrane</keyword>
<keyword id="KW-1133">Transmembrane helix</keyword>
<reference key="1">
    <citation type="journal article" date="1998" name="J. Exp. Med.">
        <title>Molecular and biological characterization of the murine leukotriene B4 receptor expressed on eosinophils.</title>
        <authorList>
            <person name="Huang W.-W."/>
            <person name="Garcia-Zepeda E.A."/>
            <person name="Sauty A."/>
            <person name="Oettgen H.C."/>
            <person name="Rothenberg M.E."/>
            <person name="Luster A.D."/>
        </authorList>
    </citation>
    <scope>NUCLEOTIDE SEQUENCE [MRNA]</scope>
</reference>
<reference key="2">
    <citation type="submission" date="1998-11" db="EMBL/GenBank/DDBJ databases">
        <title>Expression cloning of a murine leukotriene B4 receptor.</title>
        <authorList>
            <person name="Jensen B.S."/>
            <person name="Mollerup J."/>
        </authorList>
    </citation>
    <scope>NUCLEOTIDE SEQUENCE</scope>
    <source>
        <strain>C57BL/6J</strain>
        <tissue>Mammary gland</tissue>
    </source>
</reference>
<reference key="3">
    <citation type="journal article" date="1999" name="J. Biol. Chem.">
        <title>Leukotriene binding, signaling, and analysis of HIV coreceptor function in mouse and human leukotriene B4 receptor-transfected cells.</title>
        <authorList>
            <person name="Martin V."/>
            <person name="Ronde P."/>
            <person name="Unett D."/>
            <person name="Wong A."/>
            <person name="Hoffman T.L."/>
            <person name="Edinger A.L."/>
            <person name="Doms R.W."/>
            <person name="Funk C.D."/>
        </authorList>
    </citation>
    <scope>NUCLEOTIDE SEQUENCE [GENOMIC DNA]</scope>
    <source>
        <strain>129/Sv</strain>
        <tissue>Liver</tissue>
    </source>
</reference>
<reference key="4">
    <citation type="journal article" date="2004" name="Genome Res.">
        <title>The status, quality, and expansion of the NIH full-length cDNA project: the Mammalian Gene Collection (MGC).</title>
        <authorList>
            <consortium name="The MGC Project Team"/>
        </authorList>
    </citation>
    <scope>NUCLEOTIDE SEQUENCE [LARGE SCALE MRNA]</scope>
    <source>
        <strain>C57BL/6J</strain>
        <tissue>Mammary gland</tissue>
    </source>
</reference>
<gene>
    <name type="primary">Ltb4r</name>
    <name type="synonym">Bltr</name>
    <name type="synonym">Ltb4r1</name>
</gene>
<dbReference type="EMBL" id="AF044030">
    <property type="protein sequence ID" value="AAC61677.1"/>
    <property type="molecule type" value="mRNA"/>
</dbReference>
<dbReference type="EMBL" id="AF110104">
    <property type="protein sequence ID" value="AAD09817.1"/>
    <property type="molecule type" value="mRNA"/>
</dbReference>
<dbReference type="EMBL" id="AF077673">
    <property type="protein sequence ID" value="AAD43002.1"/>
    <property type="molecule type" value="Genomic_DNA"/>
</dbReference>
<dbReference type="EMBL" id="BC064063">
    <property type="protein sequence ID" value="AAH64063.1"/>
    <property type="molecule type" value="mRNA"/>
</dbReference>
<dbReference type="CCDS" id="CCDS27129.1"/>
<dbReference type="RefSeq" id="NP_032545.1">
    <property type="nucleotide sequence ID" value="NM_008519.2"/>
</dbReference>
<dbReference type="SMR" id="O88855"/>
<dbReference type="BioGRID" id="201219">
    <property type="interactions" value="1"/>
</dbReference>
<dbReference type="FunCoup" id="O88855">
    <property type="interactions" value="457"/>
</dbReference>
<dbReference type="STRING" id="10090.ENSMUSP00000051368"/>
<dbReference type="BindingDB" id="O88855"/>
<dbReference type="ChEMBL" id="CHEMBL2657"/>
<dbReference type="GuidetoPHARMACOLOGY" id="267"/>
<dbReference type="GlyCosmos" id="O88855">
    <property type="glycosylation" value="2 sites, No reported glycans"/>
</dbReference>
<dbReference type="GlyGen" id="O88855">
    <property type="glycosylation" value="3 sites"/>
</dbReference>
<dbReference type="iPTMnet" id="O88855"/>
<dbReference type="PhosphoSitePlus" id="O88855"/>
<dbReference type="PaxDb" id="10090-ENSMUSP00000051368"/>
<dbReference type="ProteomicsDB" id="292123"/>
<dbReference type="DNASU" id="16995"/>
<dbReference type="Ensembl" id="ENSMUST00000057569.4">
    <property type="protein sequence ID" value="ENSMUSP00000051368.4"/>
    <property type="gene ID" value="ENSMUSG00000046908.6"/>
</dbReference>
<dbReference type="GeneID" id="16995"/>
<dbReference type="KEGG" id="mmu:16995"/>
<dbReference type="UCSC" id="uc007uar.2">
    <property type="organism name" value="mouse"/>
</dbReference>
<dbReference type="AGR" id="MGI:1309472"/>
<dbReference type="CTD" id="16995"/>
<dbReference type="MGI" id="MGI:1309472">
    <property type="gene designation" value="Ltb4r1"/>
</dbReference>
<dbReference type="VEuPathDB" id="HostDB:ENSMUSG00000046908"/>
<dbReference type="eggNOG" id="KOG3656">
    <property type="taxonomic scope" value="Eukaryota"/>
</dbReference>
<dbReference type="GeneTree" id="ENSGT01130000278323"/>
<dbReference type="HOGENOM" id="CLU_009579_8_0_1"/>
<dbReference type="InParanoid" id="O88855"/>
<dbReference type="OMA" id="LCHYICG"/>
<dbReference type="OrthoDB" id="8888529at2759"/>
<dbReference type="PhylomeDB" id="O88855"/>
<dbReference type="TreeFam" id="TF330976"/>
<dbReference type="Reactome" id="R-MMU-391906">
    <property type="pathway name" value="Leukotriene receptors"/>
</dbReference>
<dbReference type="Reactome" id="R-MMU-416476">
    <property type="pathway name" value="G alpha (q) signalling events"/>
</dbReference>
<dbReference type="BioGRID-ORCS" id="16995">
    <property type="hits" value="3 hits in 78 CRISPR screens"/>
</dbReference>
<dbReference type="PRO" id="PR:O88855"/>
<dbReference type="Proteomes" id="UP000000589">
    <property type="component" value="Chromosome 14"/>
</dbReference>
<dbReference type="RNAct" id="O88855">
    <property type="molecule type" value="protein"/>
</dbReference>
<dbReference type="Bgee" id="ENSMUSG00000046908">
    <property type="expression patterns" value="Expressed in granulocyte and 45 other cell types or tissues"/>
</dbReference>
<dbReference type="ExpressionAtlas" id="O88855">
    <property type="expression patterns" value="baseline and differential"/>
</dbReference>
<dbReference type="GO" id="GO:0005886">
    <property type="term" value="C:plasma membrane"/>
    <property type="evidence" value="ECO:0007669"/>
    <property type="project" value="UniProtKB-SubCell"/>
</dbReference>
<dbReference type="GO" id="GO:0001632">
    <property type="term" value="F:leukotriene B4 receptor activity"/>
    <property type="evidence" value="ECO:0000314"/>
    <property type="project" value="MGI"/>
</dbReference>
<dbReference type="GO" id="GO:0007165">
    <property type="term" value="P:signal transduction"/>
    <property type="evidence" value="ECO:0000314"/>
    <property type="project" value="MGI"/>
</dbReference>
<dbReference type="FunFam" id="1.20.1070.10:FF:000109">
    <property type="entry name" value="Leukotriene B4 receptor"/>
    <property type="match status" value="1"/>
</dbReference>
<dbReference type="Gene3D" id="1.20.1070.10">
    <property type="entry name" value="Rhodopsin 7-helix transmembrane proteins"/>
    <property type="match status" value="1"/>
</dbReference>
<dbReference type="InterPro" id="IPR000826">
    <property type="entry name" value="Formyl_rcpt-rel"/>
</dbReference>
<dbReference type="InterPro" id="IPR000276">
    <property type="entry name" value="GPCR_Rhodpsn"/>
</dbReference>
<dbReference type="InterPro" id="IPR017452">
    <property type="entry name" value="GPCR_Rhodpsn_7TM"/>
</dbReference>
<dbReference type="InterPro" id="IPR003981">
    <property type="entry name" value="Leukotriene_B4_rcpt"/>
</dbReference>
<dbReference type="InterPro" id="IPR003983">
    <property type="entry name" value="Leukotriene_B4_typ-1_rcpt"/>
</dbReference>
<dbReference type="PANTHER" id="PTHR24225">
    <property type="entry name" value="CHEMOTACTIC RECEPTOR"/>
    <property type="match status" value="1"/>
</dbReference>
<dbReference type="PANTHER" id="PTHR24225:SF72">
    <property type="entry name" value="G-PROTEIN COUPLED RECEPTORS FAMILY 1 PROFILE DOMAIN-CONTAINING PROTEIN-RELATED"/>
    <property type="match status" value="1"/>
</dbReference>
<dbReference type="Pfam" id="PF00001">
    <property type="entry name" value="7tm_1"/>
    <property type="match status" value="1"/>
</dbReference>
<dbReference type="PRINTS" id="PR00237">
    <property type="entry name" value="GPCRRHODOPSN"/>
</dbReference>
<dbReference type="PRINTS" id="PR01477">
    <property type="entry name" value="LTB1RECEPTOR"/>
</dbReference>
<dbReference type="PRINTS" id="PR01476">
    <property type="entry name" value="LTBRECEPTOR"/>
</dbReference>
<dbReference type="SUPFAM" id="SSF81321">
    <property type="entry name" value="Family A G protein-coupled receptor-like"/>
    <property type="match status" value="1"/>
</dbReference>
<dbReference type="PROSITE" id="PS00237">
    <property type="entry name" value="G_PROTEIN_RECEP_F1_1"/>
    <property type="match status" value="1"/>
</dbReference>
<dbReference type="PROSITE" id="PS50262">
    <property type="entry name" value="G_PROTEIN_RECEP_F1_2"/>
    <property type="match status" value="1"/>
</dbReference>
<organism>
    <name type="scientific">Mus musculus</name>
    <name type="common">Mouse</name>
    <dbReference type="NCBI Taxonomy" id="10090"/>
    <lineage>
        <taxon>Eukaryota</taxon>
        <taxon>Metazoa</taxon>
        <taxon>Chordata</taxon>
        <taxon>Craniata</taxon>
        <taxon>Vertebrata</taxon>
        <taxon>Euteleostomi</taxon>
        <taxon>Mammalia</taxon>
        <taxon>Eutheria</taxon>
        <taxon>Euarchontoglires</taxon>
        <taxon>Glires</taxon>
        <taxon>Rodentia</taxon>
        <taxon>Myomorpha</taxon>
        <taxon>Muroidea</taxon>
        <taxon>Muridae</taxon>
        <taxon>Murinae</taxon>
        <taxon>Mus</taxon>
        <taxon>Mus</taxon>
    </lineage>
</organism>
<accession>O88855</accession>
<name>LT4R1_MOUSE</name>